<name>ADMB_ARTBC</name>
<accession>D4B1G0</accession>
<proteinExistence type="inferred from homology"/>
<keyword id="KW-1015">Disulfide bond</keyword>
<keyword id="KW-0325">Glycoprotein</keyword>
<keyword id="KW-0378">Hydrolase</keyword>
<keyword id="KW-0472">Membrane</keyword>
<keyword id="KW-0479">Metal-binding</keyword>
<keyword id="KW-0482">Metalloprotease</keyword>
<keyword id="KW-0645">Protease</keyword>
<keyword id="KW-1185">Reference proteome</keyword>
<keyword id="KW-0732">Signal</keyword>
<keyword id="KW-0812">Transmembrane</keyword>
<keyword id="KW-1133">Transmembrane helix</keyword>
<keyword id="KW-0862">Zinc</keyword>
<protein>
    <recommendedName>
        <fullName>Disintegrin and metalloproteinase domain-containing protein B</fullName>
        <shortName>ADAM B</shortName>
        <ecNumber>3.4.24.-</ecNumber>
    </recommendedName>
</protein>
<organism>
    <name type="scientific">Arthroderma benhamiae (strain ATCC MYA-4681 / CBS 112371)</name>
    <name type="common">Trichophyton mentagrophytes</name>
    <dbReference type="NCBI Taxonomy" id="663331"/>
    <lineage>
        <taxon>Eukaryota</taxon>
        <taxon>Fungi</taxon>
        <taxon>Dikarya</taxon>
        <taxon>Ascomycota</taxon>
        <taxon>Pezizomycotina</taxon>
        <taxon>Eurotiomycetes</taxon>
        <taxon>Eurotiomycetidae</taxon>
        <taxon>Onygenales</taxon>
        <taxon>Arthrodermataceae</taxon>
        <taxon>Trichophyton</taxon>
    </lineage>
</organism>
<sequence>MKAFSCLLSVIATAASLFQHVDARSHARDKLNNISRVERPVIHTPSRRVHAHSHFDLTFDLYPRSSRIKLQLEPNHDVLSHDARVTFLDTEGNVDRTERIERRDHSVFKGWAWTQAKSGAWERVGWARIILHRDGEDPLFEGVFTVMHDHHQVIAKSKYVRKRHQQDPPLDNTPGEYMLLFRGSDIAQTQSTGNVERSIMSSPSCDADTLAYDSNSNFMFPPLPEENNTSIWNYFMTSIGKRQMTDTGGVVPGSRDLKETIGSTSGCPNTRKVALIGVVADCTYTNTFASEMDARADIISVVNAASVVYEHSFNISLTLGEINILPKNCPATASSATPFNQQCDDRAGGGSFTLADRLNTFSAWRGKKTDDFAFWTLMTDCTTENQVGLAWAAQLCVKGVQGNPDSRNSSSQAVAGANVVSKTDNTWQVFAHEAGHIFGAVHDCDSMLCQNPANPDNSRCCPATASTCDARGRFMMNPTSGSQITDFSPCSIGQICSRMARRTILTSCLTTNRGVDTISGQQCGNGIVEDGEDCDCGDEESCKGNTCCDPKTCKYTSGSQCDDANEECCKGCKFASSSTICRTSSGPCDPEEKCSGNSGDCPHDIHSKDGETCGTDLQCASGQCTSRDLQCQMHLGNQVAGSRTVAFDSYGCEVACKDPDRPNVRYEGSLTFLDGTPCGGGGTCKNGQCSGSTFGNEVSDWVSRHKPIVIGVAVGAGCLLLLAIASCICGRSRRQRPRNRKMPPINMRPMAPVYNGWNGAPPNAQQSSPGGHPPYNNIPPPINAPPPAYPGHLPSTRYA</sequence>
<evidence type="ECO:0000250" key="1"/>
<evidence type="ECO:0000255" key="2"/>
<evidence type="ECO:0000255" key="3">
    <source>
        <dbReference type="PROSITE-ProRule" id="PRU00068"/>
    </source>
</evidence>
<evidence type="ECO:0000255" key="4">
    <source>
        <dbReference type="PROSITE-ProRule" id="PRU00276"/>
    </source>
</evidence>
<evidence type="ECO:0000256" key="5">
    <source>
        <dbReference type="SAM" id="MobiDB-lite"/>
    </source>
</evidence>
<evidence type="ECO:0000305" key="6"/>
<feature type="signal peptide" evidence="2">
    <location>
        <begin position="1"/>
        <end position="23"/>
    </location>
</feature>
<feature type="chain" id="PRO_0000397720" description="Disintegrin and metalloproteinase domain-containing protein B">
    <location>
        <begin position="24"/>
        <end position="799"/>
    </location>
</feature>
<feature type="topological domain" description="Extracellular" evidence="2">
    <location>
        <begin position="24"/>
        <end position="707"/>
    </location>
</feature>
<feature type="transmembrane region" description="Helical" evidence="2">
    <location>
        <begin position="708"/>
        <end position="728"/>
    </location>
</feature>
<feature type="topological domain" description="Cytoplasmic" evidence="2">
    <location>
        <begin position="729"/>
        <end position="799"/>
    </location>
</feature>
<feature type="domain" description="Peptidase M12B" evidence="4">
    <location>
        <begin position="272"/>
        <end position="511"/>
    </location>
</feature>
<feature type="domain" description="Disintegrin" evidence="3">
    <location>
        <begin position="520"/>
        <end position="609"/>
    </location>
</feature>
<feature type="region of interest" description="Disordered" evidence="5">
    <location>
        <begin position="753"/>
        <end position="799"/>
    </location>
</feature>
<feature type="compositionally biased region" description="Pro residues" evidence="5">
    <location>
        <begin position="776"/>
        <end position="789"/>
    </location>
</feature>
<feature type="active site" evidence="4">
    <location>
        <position position="433"/>
    </location>
</feature>
<feature type="binding site" evidence="4">
    <location>
        <position position="432"/>
    </location>
    <ligand>
        <name>Zn(2+)</name>
        <dbReference type="ChEBI" id="CHEBI:29105"/>
        <note>catalytic</note>
    </ligand>
</feature>
<feature type="binding site" evidence="4">
    <location>
        <position position="436"/>
    </location>
    <ligand>
        <name>Zn(2+)</name>
        <dbReference type="ChEBI" id="CHEBI:29105"/>
        <note>catalytic</note>
    </ligand>
</feature>
<feature type="binding site" evidence="4">
    <location>
        <position position="442"/>
    </location>
    <ligand>
        <name>Zn(2+)</name>
        <dbReference type="ChEBI" id="CHEBI:29105"/>
        <note>catalytic</note>
    </ligand>
</feature>
<feature type="glycosylation site" description="N-linked (GlcNAc...) asparagine" evidence="2">
    <location>
        <position position="33"/>
    </location>
</feature>
<feature type="glycosylation site" description="N-linked (GlcNAc...) asparagine" evidence="2">
    <location>
        <position position="227"/>
    </location>
</feature>
<feature type="glycosylation site" description="N-linked (GlcNAc...) asparagine" evidence="2">
    <location>
        <position position="228"/>
    </location>
</feature>
<feature type="glycosylation site" description="N-linked (GlcNAc...) asparagine" evidence="2">
    <location>
        <position position="314"/>
    </location>
</feature>
<feature type="glycosylation site" description="N-linked (GlcNAc...) asparagine" evidence="2">
    <location>
        <position position="408"/>
    </location>
</feature>
<feature type="disulfide bond" evidence="1">
    <location>
        <begin position="396"/>
        <end position="496"/>
    </location>
</feature>
<feature type="disulfide bond" evidence="1">
    <location>
        <begin position="449"/>
        <end position="460"/>
    </location>
</feature>
<feature type="disulfide bond" evidence="1">
    <location>
        <begin position="581"/>
        <end position="601"/>
    </location>
</feature>
<comment type="function">
    <text evidence="1">Probable zinc protease.</text>
</comment>
<comment type="cofactor">
    <cofactor evidence="1">
        <name>Zn(2+)</name>
        <dbReference type="ChEBI" id="CHEBI:29105"/>
    </cofactor>
    <text evidence="1">Binds 1 zinc ion per subunit.</text>
</comment>
<comment type="subcellular location">
    <subcellularLocation>
        <location>Membrane</location>
        <topology>Single-pass type I membrane protein</topology>
    </subcellularLocation>
</comment>
<comment type="sequence caution" evidence="6">
    <conflict type="erroneous gene model prediction">
        <sequence resource="EMBL-CDS" id="EFE30799"/>
    </conflict>
</comment>
<dbReference type="EC" id="3.4.24.-"/>
<dbReference type="EMBL" id="ABSU01000026">
    <property type="protein sequence ID" value="EFE30799.1"/>
    <property type="status" value="ALT_SEQ"/>
    <property type="molecule type" value="Genomic_DNA"/>
</dbReference>
<dbReference type="RefSeq" id="XP_003011439.1">
    <property type="nucleotide sequence ID" value="XM_003011393.1"/>
</dbReference>
<dbReference type="SMR" id="D4B1G0"/>
<dbReference type="GlyCosmos" id="D4B1G0">
    <property type="glycosylation" value="5 sites, No reported glycans"/>
</dbReference>
<dbReference type="GeneID" id="9526391"/>
<dbReference type="KEGG" id="abe:ARB_02289"/>
<dbReference type="eggNOG" id="KOG3607">
    <property type="taxonomic scope" value="Eukaryota"/>
</dbReference>
<dbReference type="HOGENOM" id="CLU_012383_1_0_1"/>
<dbReference type="Proteomes" id="UP000008866">
    <property type="component" value="Unassembled WGS sequence"/>
</dbReference>
<dbReference type="GO" id="GO:0016020">
    <property type="term" value="C:membrane"/>
    <property type="evidence" value="ECO:0007669"/>
    <property type="project" value="UniProtKB-SubCell"/>
</dbReference>
<dbReference type="GO" id="GO:0046872">
    <property type="term" value="F:metal ion binding"/>
    <property type="evidence" value="ECO:0007669"/>
    <property type="project" value="UniProtKB-KW"/>
</dbReference>
<dbReference type="GO" id="GO:0004222">
    <property type="term" value="F:metalloendopeptidase activity"/>
    <property type="evidence" value="ECO:0007669"/>
    <property type="project" value="InterPro"/>
</dbReference>
<dbReference type="GO" id="GO:0006508">
    <property type="term" value="P:proteolysis"/>
    <property type="evidence" value="ECO:0007669"/>
    <property type="project" value="UniProtKB-KW"/>
</dbReference>
<dbReference type="CDD" id="cd04271">
    <property type="entry name" value="ZnMc_ADAM_fungal"/>
    <property type="match status" value="1"/>
</dbReference>
<dbReference type="FunFam" id="4.10.70.10:FF:000003">
    <property type="entry name" value="Disintegrin and metalloproteinase domain-containing protein 17"/>
    <property type="match status" value="1"/>
</dbReference>
<dbReference type="Gene3D" id="3.40.1620.60">
    <property type="match status" value="1"/>
</dbReference>
<dbReference type="Gene3D" id="3.40.390.10">
    <property type="entry name" value="Collagenase (Catalytic Domain)"/>
    <property type="match status" value="1"/>
</dbReference>
<dbReference type="Gene3D" id="4.10.70.10">
    <property type="entry name" value="Disintegrin domain"/>
    <property type="match status" value="1"/>
</dbReference>
<dbReference type="InterPro" id="IPR006586">
    <property type="entry name" value="ADAM_Cys-rich"/>
</dbReference>
<dbReference type="InterPro" id="IPR041645">
    <property type="entry name" value="ADAMTS_CR_2"/>
</dbReference>
<dbReference type="InterPro" id="IPR001762">
    <property type="entry name" value="Disintegrin_dom"/>
</dbReference>
<dbReference type="InterPro" id="IPR036436">
    <property type="entry name" value="Disintegrin_dom_sf"/>
</dbReference>
<dbReference type="InterPro" id="IPR024079">
    <property type="entry name" value="MetalloPept_cat_dom_sf"/>
</dbReference>
<dbReference type="InterPro" id="IPR001590">
    <property type="entry name" value="Peptidase_M12B"/>
</dbReference>
<dbReference type="InterPro" id="IPR034028">
    <property type="entry name" value="ZnMc_ADAM_fungal"/>
</dbReference>
<dbReference type="PANTHER" id="PTHR11905">
    <property type="entry name" value="ADAM A DISINTEGRIN AND METALLOPROTEASE DOMAIN"/>
    <property type="match status" value="1"/>
</dbReference>
<dbReference type="PANTHER" id="PTHR11905:SF159">
    <property type="entry name" value="ADAM METALLOPROTEASE"/>
    <property type="match status" value="1"/>
</dbReference>
<dbReference type="Pfam" id="PF17771">
    <property type="entry name" value="ADAMTS_CR_2"/>
    <property type="match status" value="1"/>
</dbReference>
<dbReference type="Pfam" id="PF00200">
    <property type="entry name" value="Disintegrin"/>
    <property type="match status" value="1"/>
</dbReference>
<dbReference type="Pfam" id="PF13688">
    <property type="entry name" value="Reprolysin_5"/>
    <property type="match status" value="1"/>
</dbReference>
<dbReference type="SMART" id="SM00608">
    <property type="entry name" value="ACR"/>
    <property type="match status" value="1"/>
</dbReference>
<dbReference type="SMART" id="SM00050">
    <property type="entry name" value="DISIN"/>
    <property type="match status" value="1"/>
</dbReference>
<dbReference type="SUPFAM" id="SSF57552">
    <property type="entry name" value="Blood coagulation inhibitor (disintegrin)"/>
    <property type="match status" value="1"/>
</dbReference>
<dbReference type="SUPFAM" id="SSF55486">
    <property type="entry name" value="Metalloproteases ('zincins'), catalytic domain"/>
    <property type="match status" value="1"/>
</dbReference>
<dbReference type="PROSITE" id="PS50215">
    <property type="entry name" value="ADAM_MEPRO"/>
    <property type="match status" value="1"/>
</dbReference>
<dbReference type="PROSITE" id="PS50214">
    <property type="entry name" value="DISINTEGRIN_2"/>
    <property type="match status" value="1"/>
</dbReference>
<reference key="1">
    <citation type="journal article" date="2011" name="Genome Biol.">
        <title>Comparative and functional genomics provide insights into the pathogenicity of dermatophytic fungi.</title>
        <authorList>
            <person name="Burmester A."/>
            <person name="Shelest E."/>
            <person name="Gloeckner G."/>
            <person name="Heddergott C."/>
            <person name="Schindler S."/>
            <person name="Staib P."/>
            <person name="Heidel A."/>
            <person name="Felder M."/>
            <person name="Petzold A."/>
            <person name="Szafranski K."/>
            <person name="Feuermann M."/>
            <person name="Pedruzzi I."/>
            <person name="Priebe S."/>
            <person name="Groth M."/>
            <person name="Winkler R."/>
            <person name="Li W."/>
            <person name="Kniemeyer O."/>
            <person name="Schroeckh V."/>
            <person name="Hertweck C."/>
            <person name="Hube B."/>
            <person name="White T.C."/>
            <person name="Platzer M."/>
            <person name="Guthke R."/>
            <person name="Heitman J."/>
            <person name="Woestemeyer J."/>
            <person name="Zipfel P.F."/>
            <person name="Monod M."/>
            <person name="Brakhage A.A."/>
        </authorList>
    </citation>
    <scope>NUCLEOTIDE SEQUENCE [LARGE SCALE GENOMIC DNA]</scope>
    <source>
        <strain>ATCC MYA-4681 / CBS 112371</strain>
    </source>
</reference>
<gene>
    <name type="primary">ADM-B</name>
    <name type="ORF">ARB_02289</name>
</gene>